<feature type="chain" id="PRO_1000021896" description="Homoserine O-succinyltransferase">
    <location>
        <begin position="1"/>
        <end position="379"/>
    </location>
</feature>
<feature type="domain" description="AB hydrolase-1" evidence="1">
    <location>
        <begin position="51"/>
        <end position="360"/>
    </location>
</feature>
<feature type="active site" description="Nucleophile" evidence="1">
    <location>
        <position position="157"/>
    </location>
</feature>
<feature type="active site" evidence="1">
    <location>
        <position position="323"/>
    </location>
</feature>
<feature type="active site" evidence="1">
    <location>
        <position position="356"/>
    </location>
</feature>
<feature type="binding site" evidence="1">
    <location>
        <position position="227"/>
    </location>
    <ligand>
        <name>substrate</name>
    </ligand>
</feature>
<feature type="binding site" evidence="1">
    <location>
        <position position="357"/>
    </location>
    <ligand>
        <name>substrate</name>
    </ligand>
</feature>
<feature type="site" description="Important for acyl-CoA specificity" evidence="1">
    <location>
        <position position="325"/>
    </location>
</feature>
<keyword id="KW-0012">Acyltransferase</keyword>
<keyword id="KW-0028">Amino-acid biosynthesis</keyword>
<keyword id="KW-0963">Cytoplasm</keyword>
<keyword id="KW-0486">Methionine biosynthesis</keyword>
<keyword id="KW-0808">Transferase</keyword>
<organism>
    <name type="scientific">Ectopseudomonas mendocina (strain ymp)</name>
    <name type="common">Pseudomonas mendocina</name>
    <dbReference type="NCBI Taxonomy" id="399739"/>
    <lineage>
        <taxon>Bacteria</taxon>
        <taxon>Pseudomonadati</taxon>
        <taxon>Pseudomonadota</taxon>
        <taxon>Gammaproteobacteria</taxon>
        <taxon>Pseudomonadales</taxon>
        <taxon>Pseudomonadaceae</taxon>
        <taxon>Ectopseudomonas</taxon>
    </lineage>
</organism>
<dbReference type="EC" id="2.3.1.46" evidence="1"/>
<dbReference type="EMBL" id="CP000680">
    <property type="protein sequence ID" value="ABP86902.1"/>
    <property type="molecule type" value="Genomic_DNA"/>
</dbReference>
<dbReference type="SMR" id="A4XZY6"/>
<dbReference type="STRING" id="399739.Pmen_4155"/>
<dbReference type="ESTHER" id="psemy-metx">
    <property type="family name" value="Homoserine_transacetylase"/>
</dbReference>
<dbReference type="KEGG" id="pmy:Pmen_4155"/>
<dbReference type="PATRIC" id="fig|399739.8.peg.4206"/>
<dbReference type="eggNOG" id="COG2021">
    <property type="taxonomic scope" value="Bacteria"/>
</dbReference>
<dbReference type="HOGENOM" id="CLU_028760_1_2_6"/>
<dbReference type="OrthoDB" id="9800754at2"/>
<dbReference type="UniPathway" id="UPA00051">
    <property type="reaction ID" value="UER00075"/>
</dbReference>
<dbReference type="GO" id="GO:0005737">
    <property type="term" value="C:cytoplasm"/>
    <property type="evidence" value="ECO:0007669"/>
    <property type="project" value="UniProtKB-SubCell"/>
</dbReference>
<dbReference type="GO" id="GO:0004414">
    <property type="term" value="F:homoserine O-acetyltransferase activity"/>
    <property type="evidence" value="ECO:0007669"/>
    <property type="project" value="TreeGrafter"/>
</dbReference>
<dbReference type="GO" id="GO:0008899">
    <property type="term" value="F:homoserine O-succinyltransferase activity"/>
    <property type="evidence" value="ECO:0007669"/>
    <property type="project" value="UniProtKB-UniRule"/>
</dbReference>
<dbReference type="GO" id="GO:0009092">
    <property type="term" value="P:homoserine metabolic process"/>
    <property type="evidence" value="ECO:0007669"/>
    <property type="project" value="TreeGrafter"/>
</dbReference>
<dbReference type="GO" id="GO:0009086">
    <property type="term" value="P:methionine biosynthetic process"/>
    <property type="evidence" value="ECO:0007669"/>
    <property type="project" value="UniProtKB-UniRule"/>
</dbReference>
<dbReference type="FunFam" id="1.10.1740.110:FF:000001">
    <property type="entry name" value="Homoserine O-acetyltransferase"/>
    <property type="match status" value="1"/>
</dbReference>
<dbReference type="Gene3D" id="1.10.1740.110">
    <property type="match status" value="1"/>
</dbReference>
<dbReference type="Gene3D" id="3.40.50.1820">
    <property type="entry name" value="alpha/beta hydrolase"/>
    <property type="match status" value="1"/>
</dbReference>
<dbReference type="HAMAP" id="MF_00296">
    <property type="entry name" value="MetX_acyltransf"/>
    <property type="match status" value="1"/>
</dbReference>
<dbReference type="InterPro" id="IPR000073">
    <property type="entry name" value="AB_hydrolase_1"/>
</dbReference>
<dbReference type="InterPro" id="IPR029058">
    <property type="entry name" value="AB_hydrolase_fold"/>
</dbReference>
<dbReference type="InterPro" id="IPR008220">
    <property type="entry name" value="HAT_MetX-like"/>
</dbReference>
<dbReference type="NCBIfam" id="TIGR01392">
    <property type="entry name" value="homoserO_Ac_trn"/>
    <property type="match status" value="1"/>
</dbReference>
<dbReference type="NCBIfam" id="NF001209">
    <property type="entry name" value="PRK00175.1"/>
    <property type="match status" value="1"/>
</dbReference>
<dbReference type="PANTHER" id="PTHR32268">
    <property type="entry name" value="HOMOSERINE O-ACETYLTRANSFERASE"/>
    <property type="match status" value="1"/>
</dbReference>
<dbReference type="PANTHER" id="PTHR32268:SF11">
    <property type="entry name" value="HOMOSERINE O-ACETYLTRANSFERASE"/>
    <property type="match status" value="1"/>
</dbReference>
<dbReference type="Pfam" id="PF00561">
    <property type="entry name" value="Abhydrolase_1"/>
    <property type="match status" value="1"/>
</dbReference>
<dbReference type="PIRSF" id="PIRSF000443">
    <property type="entry name" value="Homoser_Ac_trans"/>
    <property type="match status" value="1"/>
</dbReference>
<dbReference type="SUPFAM" id="SSF53474">
    <property type="entry name" value="alpha/beta-Hydrolases"/>
    <property type="match status" value="1"/>
</dbReference>
<protein>
    <recommendedName>
        <fullName evidence="1">Homoserine O-succinyltransferase</fullName>
        <shortName evidence="1">HST</shortName>
        <ecNumber evidence="1">2.3.1.46</ecNumber>
    </recommendedName>
    <alternativeName>
        <fullName evidence="1">Homoserine transsuccinylase</fullName>
        <shortName evidence="1">HTS</shortName>
    </alternativeName>
</protein>
<gene>
    <name evidence="1" type="primary">metXS</name>
    <name type="ordered locus">Pmen_4155</name>
</gene>
<accession>A4XZY6</accession>
<sequence length="379" mass="41647">MPTAFPEDSVGLVSPQVFRFSEPLALACGRSLAEYELVVETYGELNAARSNAVLICHALSGHHHAAGYHSPNDRKPGWWDSCIGPGKPIDTNKFFVVSLNNLGGCNGSTGPSSANPATGKPYGADFPVMTVEDWVHSQARLADVLGIEQWAAVIGGSLGGMQALQWSISYPERVRHCLAIASAPKLSAQNIAFNEVARQAILTDPEFHGGHFQERGVIPKRGLMLARMVGHITYLSDDAMGEKFGRGLKSEKLNYDFHSVEFQVESYLRYQGEEFSGRFDANTYLLMTKALDYFDPAAAHDGDLARTLAVAKADFCLMSFTTDWRFSPARSREIVDALTAAKKNVCYLEIDAPQGHDAFLMPIPRYLQAFGSYMKRIEV</sequence>
<comment type="function">
    <text evidence="1">Transfers a succinyl group from succinyl-CoA to L-homoserine, forming succinyl-L-homoserine.</text>
</comment>
<comment type="catalytic activity">
    <reaction evidence="1">
        <text>L-homoserine + succinyl-CoA = O-succinyl-L-homoserine + CoA</text>
        <dbReference type="Rhea" id="RHEA:22008"/>
        <dbReference type="ChEBI" id="CHEBI:57287"/>
        <dbReference type="ChEBI" id="CHEBI:57292"/>
        <dbReference type="ChEBI" id="CHEBI:57476"/>
        <dbReference type="ChEBI" id="CHEBI:57661"/>
        <dbReference type="EC" id="2.3.1.46"/>
    </reaction>
</comment>
<comment type="pathway">
    <text evidence="1">Amino-acid biosynthesis; L-methionine biosynthesis via de novo pathway; O-succinyl-L-homoserine from L-homoserine: step 1/1.</text>
</comment>
<comment type="subunit">
    <text evidence="1">Homodimer.</text>
</comment>
<comment type="subcellular location">
    <subcellularLocation>
        <location evidence="1">Cytoplasm</location>
    </subcellularLocation>
</comment>
<comment type="similarity">
    <text evidence="1">Belongs to the AB hydrolase superfamily. MetX family.</text>
</comment>
<name>METXS_ECTM1</name>
<evidence type="ECO:0000255" key="1">
    <source>
        <dbReference type="HAMAP-Rule" id="MF_00296"/>
    </source>
</evidence>
<reference key="1">
    <citation type="submission" date="2007-04" db="EMBL/GenBank/DDBJ databases">
        <title>Complete sequence of Pseudomonas mendocina ymp.</title>
        <authorList>
            <consortium name="US DOE Joint Genome Institute"/>
            <person name="Copeland A."/>
            <person name="Lucas S."/>
            <person name="Lapidus A."/>
            <person name="Barry K."/>
            <person name="Glavina del Rio T."/>
            <person name="Dalin E."/>
            <person name="Tice H."/>
            <person name="Pitluck S."/>
            <person name="Kiss H."/>
            <person name="Brettin T."/>
            <person name="Detter J.C."/>
            <person name="Bruce D."/>
            <person name="Han C."/>
            <person name="Schmutz J."/>
            <person name="Larimer F."/>
            <person name="Land M."/>
            <person name="Hauser L."/>
            <person name="Kyrpides N."/>
            <person name="Mikhailova N."/>
            <person name="Hersman L."/>
            <person name="Dubois J."/>
            <person name="Maurice P."/>
            <person name="Richardson P."/>
        </authorList>
    </citation>
    <scope>NUCLEOTIDE SEQUENCE [LARGE SCALE GENOMIC DNA]</scope>
    <source>
        <strain>ymp</strain>
    </source>
</reference>
<proteinExistence type="inferred from homology"/>